<name>ENO_HELPH</name>
<comment type="function">
    <text evidence="1">Catalyzes the reversible conversion of 2-phosphoglycerate (2-PG) into phosphoenolpyruvate (PEP). It is essential for the degradation of carbohydrates via glycolysis.</text>
</comment>
<comment type="catalytic activity">
    <reaction evidence="1">
        <text>(2R)-2-phosphoglycerate = phosphoenolpyruvate + H2O</text>
        <dbReference type="Rhea" id="RHEA:10164"/>
        <dbReference type="ChEBI" id="CHEBI:15377"/>
        <dbReference type="ChEBI" id="CHEBI:58289"/>
        <dbReference type="ChEBI" id="CHEBI:58702"/>
        <dbReference type="EC" id="4.2.1.11"/>
    </reaction>
</comment>
<comment type="cofactor">
    <cofactor evidence="1">
        <name>Mg(2+)</name>
        <dbReference type="ChEBI" id="CHEBI:18420"/>
    </cofactor>
    <text evidence="1">Binds a second Mg(2+) ion via substrate during catalysis.</text>
</comment>
<comment type="pathway">
    <text evidence="1">Carbohydrate degradation; glycolysis; pyruvate from D-glyceraldehyde 3-phosphate: step 4/5.</text>
</comment>
<comment type="subcellular location">
    <subcellularLocation>
        <location evidence="1">Cytoplasm</location>
    </subcellularLocation>
    <subcellularLocation>
        <location evidence="1">Secreted</location>
    </subcellularLocation>
    <subcellularLocation>
        <location evidence="1">Cell surface</location>
    </subcellularLocation>
    <text evidence="1">Fractions of enolase are present in both the cytoplasm and on the cell surface.</text>
</comment>
<comment type="similarity">
    <text evidence="1">Belongs to the enolase family.</text>
</comment>
<protein>
    <recommendedName>
        <fullName evidence="1">Enolase</fullName>
        <ecNumber evidence="1">4.2.1.11</ecNumber>
    </recommendedName>
    <alternativeName>
        <fullName evidence="1">2-phospho-D-glycerate hydro-lyase</fullName>
    </alternativeName>
    <alternativeName>
        <fullName evidence="1">2-phosphoglycerate dehydratase</fullName>
    </alternativeName>
</protein>
<evidence type="ECO:0000255" key="1">
    <source>
        <dbReference type="HAMAP-Rule" id="MF_00318"/>
    </source>
</evidence>
<organism>
    <name type="scientific">Helicobacter pylori (strain HPAG1)</name>
    <dbReference type="NCBI Taxonomy" id="357544"/>
    <lineage>
        <taxon>Bacteria</taxon>
        <taxon>Pseudomonadati</taxon>
        <taxon>Campylobacterota</taxon>
        <taxon>Epsilonproteobacteria</taxon>
        <taxon>Campylobacterales</taxon>
        <taxon>Helicobacteraceae</taxon>
        <taxon>Helicobacter</taxon>
    </lineage>
</organism>
<accession>Q1CV03</accession>
<proteinExistence type="inferred from homology"/>
<keyword id="KW-0963">Cytoplasm</keyword>
<keyword id="KW-0324">Glycolysis</keyword>
<keyword id="KW-0456">Lyase</keyword>
<keyword id="KW-0460">Magnesium</keyword>
<keyword id="KW-0479">Metal-binding</keyword>
<keyword id="KW-0964">Secreted</keyword>
<gene>
    <name evidence="1" type="primary">eno</name>
    <name type="ordered locus">HPAG1_0152</name>
</gene>
<reference key="1">
    <citation type="journal article" date="2006" name="Proc. Natl. Acad. Sci. U.S.A.">
        <title>The complete genome sequence of a chronic atrophic gastritis Helicobacter pylori strain: evolution during disease progression.</title>
        <authorList>
            <person name="Oh J.D."/>
            <person name="Kling-Baeckhed H."/>
            <person name="Giannakis M."/>
            <person name="Xu J."/>
            <person name="Fulton R.S."/>
            <person name="Fulton L.A."/>
            <person name="Cordum H.S."/>
            <person name="Wang C."/>
            <person name="Elliott G."/>
            <person name="Edwards J."/>
            <person name="Mardis E.R."/>
            <person name="Engstrand L.G."/>
            <person name="Gordon J.I."/>
        </authorList>
    </citation>
    <scope>NUCLEOTIDE SEQUENCE [LARGE SCALE GENOMIC DNA]</scope>
    <source>
        <strain>HPAG1</strain>
    </source>
</reference>
<feature type="chain" id="PRO_0000267044" description="Enolase">
    <location>
        <begin position="1"/>
        <end position="426"/>
    </location>
</feature>
<feature type="active site" description="Proton donor" evidence="1">
    <location>
        <position position="205"/>
    </location>
</feature>
<feature type="active site" description="Proton acceptor" evidence="1">
    <location>
        <position position="338"/>
    </location>
</feature>
<feature type="binding site" evidence="1">
    <location>
        <position position="163"/>
    </location>
    <ligand>
        <name>(2R)-2-phosphoglycerate</name>
        <dbReference type="ChEBI" id="CHEBI:58289"/>
    </ligand>
</feature>
<feature type="binding site" evidence="1">
    <location>
        <position position="242"/>
    </location>
    <ligand>
        <name>Mg(2+)</name>
        <dbReference type="ChEBI" id="CHEBI:18420"/>
    </ligand>
</feature>
<feature type="binding site" evidence="1">
    <location>
        <position position="286"/>
    </location>
    <ligand>
        <name>Mg(2+)</name>
        <dbReference type="ChEBI" id="CHEBI:18420"/>
    </ligand>
</feature>
<feature type="binding site" evidence="1">
    <location>
        <position position="313"/>
    </location>
    <ligand>
        <name>Mg(2+)</name>
        <dbReference type="ChEBI" id="CHEBI:18420"/>
    </ligand>
</feature>
<feature type="binding site" evidence="1">
    <location>
        <position position="338"/>
    </location>
    <ligand>
        <name>(2R)-2-phosphoglycerate</name>
        <dbReference type="ChEBI" id="CHEBI:58289"/>
    </ligand>
</feature>
<feature type="binding site" evidence="1">
    <location>
        <position position="367"/>
    </location>
    <ligand>
        <name>(2R)-2-phosphoglycerate</name>
        <dbReference type="ChEBI" id="CHEBI:58289"/>
    </ligand>
</feature>
<feature type="binding site" evidence="1">
    <location>
        <position position="368"/>
    </location>
    <ligand>
        <name>(2R)-2-phosphoglycerate</name>
        <dbReference type="ChEBI" id="CHEBI:58289"/>
    </ligand>
</feature>
<feature type="binding site" evidence="1">
    <location>
        <position position="389"/>
    </location>
    <ligand>
        <name>(2R)-2-phosphoglycerate</name>
        <dbReference type="ChEBI" id="CHEBI:58289"/>
    </ligand>
</feature>
<sequence length="426" mass="46562">MLTIKDIHALEVMDSRGNPTIQASVILSDNTKASAIVPSGASTGKREALELRDNDKTRFLGKGVLRACENVNSVIKHHLIGLEAINQAFVDERLRALDGTPNYANLGANAVLGVSMALARASAKALNLPLYRYLGGANALTLPVPMLNIINGGTHANNSIDFQEYMIMPLGFESFREALRASTEVYHTLKKLLDGKNQLTSVGDEGGFAPNFSNNVEPLEAISQAIEKAGYKLGEEIALALDVASSELVDENFNYHLKGENKILDSHELVAYYKELVAKYPIVSIEDGLSEDDWEGWAFLSKELGRQIQLVGDDLFVTNASILQKGIEKNIANAILIKPNQIGTISETLETIRLAKHHAYQCVMSHRSGESEDSFIADFAVALNAGEIKTGSTARSERIAKYNRLLEIEHELKGGIYIGKELFKHG</sequence>
<dbReference type="EC" id="4.2.1.11" evidence="1"/>
<dbReference type="EMBL" id="CP000241">
    <property type="protein sequence ID" value="ABF84219.1"/>
    <property type="molecule type" value="Genomic_DNA"/>
</dbReference>
<dbReference type="RefSeq" id="WP_000955641.1">
    <property type="nucleotide sequence ID" value="NC_008086.1"/>
</dbReference>
<dbReference type="SMR" id="Q1CV03"/>
<dbReference type="KEGG" id="hpa:HPAG1_0152"/>
<dbReference type="HOGENOM" id="CLU_031223_2_1_7"/>
<dbReference type="UniPathway" id="UPA00109">
    <property type="reaction ID" value="UER00187"/>
</dbReference>
<dbReference type="GO" id="GO:0009986">
    <property type="term" value="C:cell surface"/>
    <property type="evidence" value="ECO:0007669"/>
    <property type="project" value="UniProtKB-SubCell"/>
</dbReference>
<dbReference type="GO" id="GO:0005576">
    <property type="term" value="C:extracellular region"/>
    <property type="evidence" value="ECO:0007669"/>
    <property type="project" value="UniProtKB-SubCell"/>
</dbReference>
<dbReference type="GO" id="GO:0000015">
    <property type="term" value="C:phosphopyruvate hydratase complex"/>
    <property type="evidence" value="ECO:0007669"/>
    <property type="project" value="InterPro"/>
</dbReference>
<dbReference type="GO" id="GO:0000287">
    <property type="term" value="F:magnesium ion binding"/>
    <property type="evidence" value="ECO:0007669"/>
    <property type="project" value="UniProtKB-UniRule"/>
</dbReference>
<dbReference type="GO" id="GO:0004634">
    <property type="term" value="F:phosphopyruvate hydratase activity"/>
    <property type="evidence" value="ECO:0007669"/>
    <property type="project" value="UniProtKB-UniRule"/>
</dbReference>
<dbReference type="GO" id="GO:0006096">
    <property type="term" value="P:glycolytic process"/>
    <property type="evidence" value="ECO:0007669"/>
    <property type="project" value="UniProtKB-UniRule"/>
</dbReference>
<dbReference type="CDD" id="cd03313">
    <property type="entry name" value="enolase"/>
    <property type="match status" value="1"/>
</dbReference>
<dbReference type="Gene3D" id="3.20.20.120">
    <property type="entry name" value="Enolase-like C-terminal domain"/>
    <property type="match status" value="1"/>
</dbReference>
<dbReference type="Gene3D" id="3.30.390.10">
    <property type="entry name" value="Enolase-like, N-terminal domain"/>
    <property type="match status" value="1"/>
</dbReference>
<dbReference type="HAMAP" id="MF_00318">
    <property type="entry name" value="Enolase"/>
    <property type="match status" value="1"/>
</dbReference>
<dbReference type="InterPro" id="IPR000941">
    <property type="entry name" value="Enolase"/>
</dbReference>
<dbReference type="InterPro" id="IPR036849">
    <property type="entry name" value="Enolase-like_C_sf"/>
</dbReference>
<dbReference type="InterPro" id="IPR029017">
    <property type="entry name" value="Enolase-like_N"/>
</dbReference>
<dbReference type="InterPro" id="IPR020810">
    <property type="entry name" value="Enolase_C"/>
</dbReference>
<dbReference type="InterPro" id="IPR020809">
    <property type="entry name" value="Enolase_CS"/>
</dbReference>
<dbReference type="InterPro" id="IPR020811">
    <property type="entry name" value="Enolase_N"/>
</dbReference>
<dbReference type="NCBIfam" id="TIGR01060">
    <property type="entry name" value="eno"/>
    <property type="match status" value="1"/>
</dbReference>
<dbReference type="PANTHER" id="PTHR11902">
    <property type="entry name" value="ENOLASE"/>
    <property type="match status" value="1"/>
</dbReference>
<dbReference type="PANTHER" id="PTHR11902:SF1">
    <property type="entry name" value="ENOLASE"/>
    <property type="match status" value="1"/>
</dbReference>
<dbReference type="Pfam" id="PF00113">
    <property type="entry name" value="Enolase_C"/>
    <property type="match status" value="1"/>
</dbReference>
<dbReference type="Pfam" id="PF03952">
    <property type="entry name" value="Enolase_N"/>
    <property type="match status" value="1"/>
</dbReference>
<dbReference type="PIRSF" id="PIRSF001400">
    <property type="entry name" value="Enolase"/>
    <property type="match status" value="1"/>
</dbReference>
<dbReference type="PRINTS" id="PR00148">
    <property type="entry name" value="ENOLASE"/>
</dbReference>
<dbReference type="SFLD" id="SFLDS00001">
    <property type="entry name" value="Enolase"/>
    <property type="match status" value="1"/>
</dbReference>
<dbReference type="SFLD" id="SFLDF00002">
    <property type="entry name" value="enolase"/>
    <property type="match status" value="1"/>
</dbReference>
<dbReference type="SMART" id="SM01192">
    <property type="entry name" value="Enolase_C"/>
    <property type="match status" value="1"/>
</dbReference>
<dbReference type="SMART" id="SM01193">
    <property type="entry name" value="Enolase_N"/>
    <property type="match status" value="1"/>
</dbReference>
<dbReference type="SUPFAM" id="SSF51604">
    <property type="entry name" value="Enolase C-terminal domain-like"/>
    <property type="match status" value="1"/>
</dbReference>
<dbReference type="SUPFAM" id="SSF54826">
    <property type="entry name" value="Enolase N-terminal domain-like"/>
    <property type="match status" value="1"/>
</dbReference>
<dbReference type="PROSITE" id="PS00164">
    <property type="entry name" value="ENOLASE"/>
    <property type="match status" value="1"/>
</dbReference>